<gene>
    <name evidence="4" type="primary">tfpC</name>
    <name evidence="4 6" type="ordered locus">NGO_0783</name>
</gene>
<dbReference type="EMBL" id="AE004969">
    <property type="protein sequence ID" value="AAW89497.1"/>
    <property type="molecule type" value="Genomic_DNA"/>
</dbReference>
<dbReference type="RefSeq" id="WP_003688633.1">
    <property type="nucleotide sequence ID" value="NC_002946.2"/>
</dbReference>
<dbReference type="RefSeq" id="YP_207909.1">
    <property type="nucleotide sequence ID" value="NC_002946.2"/>
</dbReference>
<dbReference type="SMR" id="Q5F8J0"/>
<dbReference type="STRING" id="242231.NGO_0783"/>
<dbReference type="KEGG" id="ngo:NGO_0783"/>
<dbReference type="PATRIC" id="fig|242231.10.peg.928"/>
<dbReference type="HOGENOM" id="CLU_112880_0_0_4"/>
<dbReference type="Proteomes" id="UP000000535">
    <property type="component" value="Chromosome"/>
</dbReference>
<dbReference type="GO" id="GO:0042597">
    <property type="term" value="C:periplasmic space"/>
    <property type="evidence" value="ECO:0000305"/>
    <property type="project" value="UniProtKB"/>
</dbReference>
<dbReference type="GO" id="GO:0009290">
    <property type="term" value="P:DNA import into cell involved in transformation"/>
    <property type="evidence" value="ECO:0000315"/>
    <property type="project" value="UniProtKB"/>
</dbReference>
<dbReference type="GO" id="GO:0030420">
    <property type="term" value="P:establishment of competence for transformation"/>
    <property type="evidence" value="ECO:0000315"/>
    <property type="project" value="UniProtKB"/>
</dbReference>
<dbReference type="GO" id="GO:0043683">
    <property type="term" value="P:type IV pilus assembly"/>
    <property type="evidence" value="ECO:0000315"/>
    <property type="project" value="UniProtKB"/>
</dbReference>
<keyword id="KW-0175">Coiled coil</keyword>
<keyword id="KW-0574">Periplasm</keyword>
<keyword id="KW-1185">Reference proteome</keyword>
<keyword id="KW-0732">Signal</keyword>
<organism evidence="6 7">
    <name type="scientific">Neisseria gonorrhoeae (strain ATCC 700825 / FA 1090)</name>
    <dbReference type="NCBI Taxonomy" id="242231"/>
    <lineage>
        <taxon>Bacteria</taxon>
        <taxon>Pseudomonadati</taxon>
        <taxon>Pseudomonadota</taxon>
        <taxon>Betaproteobacteria</taxon>
        <taxon>Neisseriales</taxon>
        <taxon>Neisseriaceae</taxon>
        <taxon>Neisseria</taxon>
    </lineage>
</organism>
<proteinExistence type="inferred from homology"/>
<reference evidence="7" key="1">
    <citation type="submission" date="2003-03" db="EMBL/GenBank/DDBJ databases">
        <title>The complete genome sequence of Neisseria gonorrhoeae.</title>
        <authorList>
            <person name="Lewis L.A."/>
            <person name="Gillaspy A.F."/>
            <person name="McLaughlin R.E."/>
            <person name="Gipson M."/>
            <person name="Ducey T.F."/>
            <person name="Ownbey T."/>
            <person name="Hartman K."/>
            <person name="Nydick C."/>
            <person name="Carson M.B."/>
            <person name="Vaughn J."/>
            <person name="Thomson C."/>
            <person name="Song L."/>
            <person name="Lin S."/>
            <person name="Yuan X."/>
            <person name="Najar F."/>
            <person name="Zhan M."/>
            <person name="Ren Q."/>
            <person name="Zhu H."/>
            <person name="Qi S."/>
            <person name="Kenton S.M."/>
            <person name="Lai H."/>
            <person name="White J.D."/>
            <person name="Clifton S."/>
            <person name="Roe B.A."/>
            <person name="Dyer D.W."/>
        </authorList>
    </citation>
    <scope>NUCLEOTIDE SEQUENCE [LARGE SCALE GENOMIC DNA]</scope>
    <source>
        <strain evidence="7">ATCC 700825 / FA 1090</strain>
    </source>
</reference>
<reference key="2">
    <citation type="journal article" date="2020" name="MBio">
        <title>Discovery of a New Neisseria gonorrhoeae Type IV Pilus Assembly Factor, TfpC.</title>
        <authorList>
            <person name="Hu L.I."/>
            <person name="Yin S."/>
            <person name="Ozer E.A."/>
            <person name="Sewell L."/>
            <person name="Rehman S."/>
            <person name="Garnett J.A."/>
            <person name="Seifert H.S."/>
        </authorList>
    </citation>
    <scope>FUNCTION</scope>
    <scope>SUBCELLULAR LOCATION</scope>
    <scope>DISRUPTION PHENOTYPE</scope>
    <source>
        <strain evidence="4">ATCC 33084 / F62 / M-1914</strain>
        <strain evidence="4">ATCC 700825 / FA 1090</strain>
        <strain evidence="4">FA19</strain>
        <strain evidence="4">MS11</strain>
    </source>
</reference>
<protein>
    <recommendedName>
        <fullName evidence="4">Type IV pilus assembly protein C</fullName>
    </recommendedName>
    <alternativeName>
        <fullName evidence="4">T4p assembly protein C</fullName>
    </alternativeName>
</protein>
<name>TFPC_NEIG1</name>
<feature type="signal peptide" evidence="1">
    <location>
        <begin position="1"/>
        <end position="23"/>
    </location>
</feature>
<feature type="chain" id="PRO_5004256063" description="Type IV pilus assembly protein C" evidence="1">
    <location>
        <begin position="24"/>
        <end position="170"/>
    </location>
</feature>
<feature type="region of interest" description="Disordered" evidence="2">
    <location>
        <begin position="87"/>
        <end position="107"/>
    </location>
</feature>
<feature type="coiled-coil region" evidence="1">
    <location>
        <begin position="109"/>
        <end position="166"/>
    </location>
</feature>
<feature type="compositionally biased region" description="Polar residues" evidence="2">
    <location>
        <begin position="93"/>
        <end position="107"/>
    </location>
</feature>
<accession>Q5F8J0</accession>
<sequence>MKSKLPLILINLSLISSPLGANAAKIYTCTINGETVYTTKPSKSCHSTDLPPIGNYSSERYILPQTPEPAPSPSNGGQAVKYKAPVKTVSKPAKSNTPPQQAPVNNSRRSILEAELSNERKALTEAQKMLSQARLAKGGNINHQKINALQSNVLDRQQNIQALQRELGRM</sequence>
<evidence type="ECO:0000255" key="1"/>
<evidence type="ECO:0000256" key="2">
    <source>
        <dbReference type="SAM" id="MobiDB-lite"/>
    </source>
</evidence>
<evidence type="ECO:0000269" key="3">
    <source>
    </source>
</evidence>
<evidence type="ECO:0000303" key="4">
    <source>
    </source>
</evidence>
<evidence type="ECO:0000305" key="5">
    <source>
    </source>
</evidence>
<evidence type="ECO:0000312" key="6">
    <source>
        <dbReference type="EMBL" id="AAW89497.1"/>
    </source>
</evidence>
<evidence type="ECO:0000312" key="7">
    <source>
        <dbReference type="Proteomes" id="UP000000535"/>
    </source>
</evidence>
<comment type="function">
    <text evidence="3">Required for stabilizing type IV pilus (T4p) in extended, nonretracted conformation on the bacterial cell surface.</text>
</comment>
<comment type="subcellular location">
    <subcellularLocation>
        <location evidence="5">Periplasm</location>
    </subcellularLocation>
</comment>
<comment type="disruption phenotype">
    <text evidence="3">Nonpiliated colony morphology with non-domed, flatter and larger-diameter colonies without dark ring at the endges of the colonies as opposed to wild-type. Reduced DNA transformation competency. Reduced total PilE protein level. Loss of type IV pilus (T4p), however, there are some PilE proteins detected near the bacterial cell surface. Simultaneous pilT deletion restores T4p expression, has higher total PilE protein level than the tfpC single mutant, yet does not restore piliated colony morphology of the wild-type.</text>
</comment>